<accession>P91629</accession>
<feature type="signal peptide" evidence="2">
    <location>
        <begin position="1"/>
        <end position="16"/>
    </location>
</feature>
<feature type="chain" id="PRO_0000006390" description="Larval cuticle protein 2">
    <location>
        <begin position="17"/>
        <end position="126"/>
    </location>
</feature>
<feature type="domain" description="Chitin-binding type R&amp;R" evidence="1">
    <location>
        <begin position="39"/>
        <end position="100"/>
    </location>
</feature>
<keyword id="KW-0193">Cuticle</keyword>
<keyword id="KW-0903">Direct protein sequencing</keyword>
<keyword id="KW-0732">Signal</keyword>
<sequence length="126" mass="13382">MFKFVMVFAVLGLAAAVAPVSRSDDVHAEVKVLSSDVRADGFDTDLVVDNSIQQAASGDIHGNAHGSFSWISPEGEHVDIKYVADENGYQPVGAVLPTPPPIPEAIVRALAWLEAHPQAPEHGAHH</sequence>
<name>LCP2_DROMI</name>
<dbReference type="EMBL" id="X97811">
    <property type="protein sequence ID" value="CAA66392.1"/>
    <property type="molecule type" value="Genomic_DNA"/>
</dbReference>
<dbReference type="EnsemblMetazoa" id="XM_017295227.2">
    <property type="protein sequence ID" value="XP_017150716.1"/>
    <property type="gene ID" value="LOC108160939"/>
</dbReference>
<dbReference type="GeneID" id="108160939"/>
<dbReference type="KEGG" id="dmn:108160939"/>
<dbReference type="FlyBase" id="FBgn0012554">
    <property type="gene designation" value="Dmir\Lcp2"/>
</dbReference>
<dbReference type="OMA" id="AYGNIHG"/>
<dbReference type="OrthoDB" id="58324at7215"/>
<dbReference type="GO" id="GO:0062129">
    <property type="term" value="C:chitin-based extracellular matrix"/>
    <property type="evidence" value="ECO:0007669"/>
    <property type="project" value="TreeGrafter"/>
</dbReference>
<dbReference type="GO" id="GO:0008010">
    <property type="term" value="F:structural constituent of chitin-based larval cuticle"/>
    <property type="evidence" value="ECO:0007669"/>
    <property type="project" value="TreeGrafter"/>
</dbReference>
<dbReference type="InterPro" id="IPR031311">
    <property type="entry name" value="CHIT_BIND_RR_consensus"/>
</dbReference>
<dbReference type="InterPro" id="IPR050468">
    <property type="entry name" value="Cuticle_Struct_Prot"/>
</dbReference>
<dbReference type="InterPro" id="IPR000618">
    <property type="entry name" value="Insect_cuticle"/>
</dbReference>
<dbReference type="PANTHER" id="PTHR10380">
    <property type="entry name" value="CUTICLE PROTEIN"/>
    <property type="match status" value="1"/>
</dbReference>
<dbReference type="PANTHER" id="PTHR10380:SF237">
    <property type="entry name" value="CUTICULAR PROTEIN 65AU, ISOFORM A-RELATED"/>
    <property type="match status" value="1"/>
</dbReference>
<dbReference type="Pfam" id="PF00379">
    <property type="entry name" value="Chitin_bind_4"/>
    <property type="match status" value="1"/>
</dbReference>
<dbReference type="PROSITE" id="PS00233">
    <property type="entry name" value="CHIT_BIND_RR_1"/>
    <property type="match status" value="1"/>
</dbReference>
<dbReference type="PROSITE" id="PS51155">
    <property type="entry name" value="CHIT_BIND_RR_2"/>
    <property type="match status" value="1"/>
</dbReference>
<protein>
    <recommendedName>
        <fullName>Larval cuticle protein 2</fullName>
    </recommendedName>
    <alternativeName>
        <fullName>Larval cuticle protein II</fullName>
    </alternativeName>
</protein>
<evidence type="ECO:0000255" key="1">
    <source>
        <dbReference type="PROSITE-ProRule" id="PRU00497"/>
    </source>
</evidence>
<evidence type="ECO:0000269" key="2">
    <source>
    </source>
</evidence>
<reference key="1">
    <citation type="journal article" date="1993" name="Proc. Natl. Acad. Sci. U.S.A.">
        <title>How Y chromosomes become genetically inert.</title>
        <authorList>
            <person name="Steinemann M."/>
            <person name="Steinemann S."/>
            <person name="Lottspeich F."/>
        </authorList>
    </citation>
    <scope>NUCLEOTIDE SEQUENCE [GENOMIC DNA]</scope>
    <scope>PROTEIN SEQUENCE OF 17-21</scope>
</reference>
<reference key="2">
    <citation type="journal article" date="1996" name="J. Mol. Evol.">
        <title>Evolution of the larval cuticle proteins coded by the secondary sex chromosome pair: X2 and neo-Y of Drosophila miranda: I. Comparison at the DNA sequence level.</title>
        <authorList>
            <person name="Steinemann M."/>
            <person name="Steinemann S."/>
            <person name="Pinsker W."/>
        </authorList>
    </citation>
    <scope>NUCLEOTIDE SEQUENCE [GENOMIC DNA]</scope>
</reference>
<organism>
    <name type="scientific">Drosophila miranda</name>
    <name type="common">Fruit fly</name>
    <dbReference type="NCBI Taxonomy" id="7229"/>
    <lineage>
        <taxon>Eukaryota</taxon>
        <taxon>Metazoa</taxon>
        <taxon>Ecdysozoa</taxon>
        <taxon>Arthropoda</taxon>
        <taxon>Hexapoda</taxon>
        <taxon>Insecta</taxon>
        <taxon>Pterygota</taxon>
        <taxon>Neoptera</taxon>
        <taxon>Endopterygota</taxon>
        <taxon>Diptera</taxon>
        <taxon>Brachycera</taxon>
        <taxon>Muscomorpha</taxon>
        <taxon>Ephydroidea</taxon>
        <taxon>Drosophilidae</taxon>
        <taxon>Drosophila</taxon>
        <taxon>Sophophora</taxon>
    </lineage>
</organism>
<comment type="function">
    <text>Component of the larval cuticle.</text>
</comment>
<proteinExistence type="evidence at protein level"/>
<gene>
    <name type="primary">Lcp2</name>
</gene>